<protein>
    <recommendedName>
        <fullName evidence="1">Xylose isomerase</fullName>
        <ecNumber evidence="1">5.3.1.5</ecNumber>
    </recommendedName>
</protein>
<accession>A7ZTB2</accession>
<organism>
    <name type="scientific">Escherichia coli O139:H28 (strain E24377A / ETEC)</name>
    <dbReference type="NCBI Taxonomy" id="331111"/>
    <lineage>
        <taxon>Bacteria</taxon>
        <taxon>Pseudomonadati</taxon>
        <taxon>Pseudomonadota</taxon>
        <taxon>Gammaproteobacteria</taxon>
        <taxon>Enterobacterales</taxon>
        <taxon>Enterobacteriaceae</taxon>
        <taxon>Escherichia</taxon>
    </lineage>
</organism>
<dbReference type="EC" id="5.3.1.5" evidence="1"/>
<dbReference type="EMBL" id="CP000800">
    <property type="protein sequence ID" value="ABV18844.1"/>
    <property type="molecule type" value="Genomic_DNA"/>
</dbReference>
<dbReference type="RefSeq" id="WP_001149581.1">
    <property type="nucleotide sequence ID" value="NC_009801.1"/>
</dbReference>
<dbReference type="SMR" id="A7ZTB2"/>
<dbReference type="GeneID" id="93778299"/>
<dbReference type="KEGG" id="ecw:EcE24377A_4061"/>
<dbReference type="HOGENOM" id="CLU_037261_1_0_6"/>
<dbReference type="Proteomes" id="UP000001122">
    <property type="component" value="Chromosome"/>
</dbReference>
<dbReference type="GO" id="GO:0005737">
    <property type="term" value="C:cytoplasm"/>
    <property type="evidence" value="ECO:0007669"/>
    <property type="project" value="UniProtKB-SubCell"/>
</dbReference>
<dbReference type="GO" id="GO:0000287">
    <property type="term" value="F:magnesium ion binding"/>
    <property type="evidence" value="ECO:0007669"/>
    <property type="project" value="UniProtKB-UniRule"/>
</dbReference>
<dbReference type="GO" id="GO:0009045">
    <property type="term" value="F:xylose isomerase activity"/>
    <property type="evidence" value="ECO:0007669"/>
    <property type="project" value="UniProtKB-UniRule"/>
</dbReference>
<dbReference type="GO" id="GO:0042732">
    <property type="term" value="P:D-xylose metabolic process"/>
    <property type="evidence" value="ECO:0007669"/>
    <property type="project" value="UniProtKB-UniRule"/>
</dbReference>
<dbReference type="FunFam" id="3.20.20.150:FF:000002">
    <property type="entry name" value="Xylose isomerase"/>
    <property type="match status" value="1"/>
</dbReference>
<dbReference type="Gene3D" id="3.20.20.150">
    <property type="entry name" value="Divalent-metal-dependent TIM barrel enzymes"/>
    <property type="match status" value="1"/>
</dbReference>
<dbReference type="HAMAP" id="MF_00455">
    <property type="entry name" value="Xylose_isom_A"/>
    <property type="match status" value="1"/>
</dbReference>
<dbReference type="InterPro" id="IPR036237">
    <property type="entry name" value="Xyl_isomerase-like_sf"/>
</dbReference>
<dbReference type="InterPro" id="IPR013452">
    <property type="entry name" value="Xylose_isom_bac"/>
</dbReference>
<dbReference type="InterPro" id="IPR001998">
    <property type="entry name" value="Xylose_isomerase"/>
</dbReference>
<dbReference type="NCBIfam" id="NF003998">
    <property type="entry name" value="PRK05474.1"/>
    <property type="match status" value="1"/>
</dbReference>
<dbReference type="NCBIfam" id="TIGR02630">
    <property type="entry name" value="xylose_isom_A"/>
    <property type="match status" value="1"/>
</dbReference>
<dbReference type="PANTHER" id="PTHR48408">
    <property type="match status" value="1"/>
</dbReference>
<dbReference type="PANTHER" id="PTHR48408:SF1">
    <property type="entry name" value="XYLOSE ISOMERASE"/>
    <property type="match status" value="1"/>
</dbReference>
<dbReference type="PRINTS" id="PR00688">
    <property type="entry name" value="XYLOSISMRASE"/>
</dbReference>
<dbReference type="SUPFAM" id="SSF51658">
    <property type="entry name" value="Xylose isomerase-like"/>
    <property type="match status" value="1"/>
</dbReference>
<dbReference type="PROSITE" id="PS51415">
    <property type="entry name" value="XYLOSE_ISOMERASE"/>
    <property type="match status" value="1"/>
</dbReference>
<proteinExistence type="inferred from homology"/>
<feature type="chain" id="PRO_1000060319" description="Xylose isomerase">
    <location>
        <begin position="1"/>
        <end position="440"/>
    </location>
</feature>
<feature type="active site" evidence="1">
    <location>
        <position position="101"/>
    </location>
</feature>
<feature type="active site" evidence="1">
    <location>
        <position position="104"/>
    </location>
</feature>
<feature type="binding site" evidence="1">
    <location>
        <position position="232"/>
    </location>
    <ligand>
        <name>Mg(2+)</name>
        <dbReference type="ChEBI" id="CHEBI:18420"/>
        <label>1</label>
    </ligand>
</feature>
<feature type="binding site" evidence="1">
    <location>
        <position position="268"/>
    </location>
    <ligand>
        <name>Mg(2+)</name>
        <dbReference type="ChEBI" id="CHEBI:18420"/>
        <label>1</label>
    </ligand>
</feature>
<feature type="binding site" evidence="1">
    <location>
        <position position="268"/>
    </location>
    <ligand>
        <name>Mg(2+)</name>
        <dbReference type="ChEBI" id="CHEBI:18420"/>
        <label>2</label>
    </ligand>
</feature>
<feature type="binding site" evidence="1">
    <location>
        <position position="271"/>
    </location>
    <ligand>
        <name>Mg(2+)</name>
        <dbReference type="ChEBI" id="CHEBI:18420"/>
        <label>2</label>
    </ligand>
</feature>
<feature type="binding site" evidence="1">
    <location>
        <position position="296"/>
    </location>
    <ligand>
        <name>Mg(2+)</name>
        <dbReference type="ChEBI" id="CHEBI:18420"/>
        <label>1</label>
    </ligand>
</feature>
<feature type="binding site" evidence="1">
    <location>
        <position position="307"/>
    </location>
    <ligand>
        <name>Mg(2+)</name>
        <dbReference type="ChEBI" id="CHEBI:18420"/>
        <label>2</label>
    </ligand>
</feature>
<feature type="binding site" evidence="1">
    <location>
        <position position="309"/>
    </location>
    <ligand>
        <name>Mg(2+)</name>
        <dbReference type="ChEBI" id="CHEBI:18420"/>
        <label>2</label>
    </ligand>
</feature>
<feature type="binding site" evidence="1">
    <location>
        <position position="339"/>
    </location>
    <ligand>
        <name>Mg(2+)</name>
        <dbReference type="ChEBI" id="CHEBI:18420"/>
        <label>1</label>
    </ligand>
</feature>
<gene>
    <name evidence="1" type="primary">xylA</name>
    <name type="ordered locus">EcE24377A_4061</name>
</gene>
<evidence type="ECO:0000255" key="1">
    <source>
        <dbReference type="HAMAP-Rule" id="MF_00455"/>
    </source>
</evidence>
<sequence length="440" mass="49733">MQAYFDQLDRVRYEGSKSSNPLAFRHYNPDELVLGKRMEEHLRFAACYWHTFCWNGADMFGVGAFNRPWQQPGEALALAKRKADVAFEFFHKLHVPFYCFHDVDVSPEGASLKEYINNFAQMVDVLAAKQEESGVKLLWGTANCFTNPRYGAGAATNPDPEVFSWAATQVVTAMEATHKLGGENYVLWGGREGYETLLNTDLRQEREQLGRFMQMVVEHKHKIGFQGTLLIEPKPQEPTKHQYDYDAATVYGFLKQFGLEKEIKLNIEANHATLAGHSFHHEIATAIALGLFGSVDANRGDAQLGWDTDQFPNSVEENALVMYEILKAGGFTTGGLNFDAKVRRQSTDKYDLFYGHIGAMDTMALALKIAARMIEDGELDKRIAQRYSGWNSELGQQILKGQMSLADLAKYAQEHNLSPVHQSGRQEQLENLVNHYLFDK</sequence>
<name>XYLA_ECO24</name>
<keyword id="KW-0119">Carbohydrate metabolism</keyword>
<keyword id="KW-0963">Cytoplasm</keyword>
<keyword id="KW-0413">Isomerase</keyword>
<keyword id="KW-0460">Magnesium</keyword>
<keyword id="KW-0479">Metal-binding</keyword>
<keyword id="KW-1185">Reference proteome</keyword>
<keyword id="KW-0859">Xylose metabolism</keyword>
<reference key="1">
    <citation type="journal article" date="2008" name="J. Bacteriol.">
        <title>The pangenome structure of Escherichia coli: comparative genomic analysis of E. coli commensal and pathogenic isolates.</title>
        <authorList>
            <person name="Rasko D.A."/>
            <person name="Rosovitz M.J."/>
            <person name="Myers G.S.A."/>
            <person name="Mongodin E.F."/>
            <person name="Fricke W.F."/>
            <person name="Gajer P."/>
            <person name="Crabtree J."/>
            <person name="Sebaihia M."/>
            <person name="Thomson N.R."/>
            <person name="Chaudhuri R."/>
            <person name="Henderson I.R."/>
            <person name="Sperandio V."/>
            <person name="Ravel J."/>
        </authorList>
    </citation>
    <scope>NUCLEOTIDE SEQUENCE [LARGE SCALE GENOMIC DNA]</scope>
    <source>
        <strain>E24377A / ETEC</strain>
    </source>
</reference>
<comment type="catalytic activity">
    <reaction evidence="1">
        <text>alpha-D-xylose = alpha-D-xylulofuranose</text>
        <dbReference type="Rhea" id="RHEA:22816"/>
        <dbReference type="ChEBI" id="CHEBI:28518"/>
        <dbReference type="ChEBI" id="CHEBI:188998"/>
        <dbReference type="EC" id="5.3.1.5"/>
    </reaction>
</comment>
<comment type="cofactor">
    <cofactor evidence="1">
        <name>Mg(2+)</name>
        <dbReference type="ChEBI" id="CHEBI:18420"/>
    </cofactor>
    <text evidence="1">Binds 2 magnesium ions per subunit.</text>
</comment>
<comment type="subunit">
    <text evidence="1">Homotetramer.</text>
</comment>
<comment type="subcellular location">
    <subcellularLocation>
        <location evidence="1">Cytoplasm</location>
    </subcellularLocation>
</comment>
<comment type="similarity">
    <text evidence="1">Belongs to the xylose isomerase family.</text>
</comment>